<feature type="chain" id="PRO_0000314760" description="UBX domain-containing protein 10">
    <location>
        <begin position="1"/>
        <end position="427"/>
    </location>
</feature>
<feature type="domain" description="UBX" evidence="3">
    <location>
        <begin position="323"/>
        <end position="425"/>
    </location>
</feature>
<feature type="coiled-coil region" evidence="2">
    <location>
        <begin position="247"/>
        <end position="311"/>
    </location>
</feature>
<dbReference type="EMBL" id="CU329672">
    <property type="protein sequence ID" value="CAA20850.1"/>
    <property type="molecule type" value="Genomic_DNA"/>
</dbReference>
<dbReference type="PIR" id="T41257">
    <property type="entry name" value="T41257"/>
</dbReference>
<dbReference type="RefSeq" id="NP_588339.1">
    <property type="nucleotide sequence ID" value="NM_001023330.2"/>
</dbReference>
<dbReference type="SMR" id="O74498"/>
<dbReference type="BioGRID" id="275830">
    <property type="interactions" value="78"/>
</dbReference>
<dbReference type="FunCoup" id="O74498">
    <property type="interactions" value="912"/>
</dbReference>
<dbReference type="STRING" id="284812.O74498"/>
<dbReference type="iPTMnet" id="O74498"/>
<dbReference type="PaxDb" id="4896-SPCC285.11.1"/>
<dbReference type="EnsemblFungi" id="SPCC285.11.1">
    <property type="protein sequence ID" value="SPCC285.11.1:pep"/>
    <property type="gene ID" value="SPCC285.11"/>
</dbReference>
<dbReference type="GeneID" id="2539260"/>
<dbReference type="KEGG" id="spo:2539260"/>
<dbReference type="PomBase" id="SPCC285.11"/>
<dbReference type="VEuPathDB" id="FungiDB:SPCC285.11"/>
<dbReference type="eggNOG" id="KOG1363">
    <property type="taxonomic scope" value="Eukaryota"/>
</dbReference>
<dbReference type="HOGENOM" id="CLU_034590_0_0_1"/>
<dbReference type="InParanoid" id="O74498"/>
<dbReference type="OMA" id="ILIRHQW"/>
<dbReference type="PhylomeDB" id="O74498"/>
<dbReference type="Reactome" id="R-SPO-6798695">
    <property type="pathway name" value="Neutrophil degranulation"/>
</dbReference>
<dbReference type="Reactome" id="R-SPO-8980692">
    <property type="pathway name" value="RHOA GTPase cycle"/>
</dbReference>
<dbReference type="PRO" id="PR:O74498"/>
<dbReference type="Proteomes" id="UP000002485">
    <property type="component" value="Chromosome III"/>
</dbReference>
<dbReference type="GO" id="GO:0044695">
    <property type="term" value="C:Dsc E3 ubiquitin ligase complex"/>
    <property type="evidence" value="ECO:0000353"/>
    <property type="project" value="PomBase"/>
</dbReference>
<dbReference type="GO" id="GO:0005783">
    <property type="term" value="C:endoplasmic reticulum"/>
    <property type="evidence" value="ECO:0007005"/>
    <property type="project" value="PomBase"/>
</dbReference>
<dbReference type="GO" id="GO:0043130">
    <property type="term" value="F:ubiquitin binding"/>
    <property type="evidence" value="ECO:0000318"/>
    <property type="project" value="GO_Central"/>
</dbReference>
<dbReference type="GO" id="GO:0031625">
    <property type="term" value="F:ubiquitin protein ligase binding"/>
    <property type="evidence" value="ECO:0000353"/>
    <property type="project" value="PomBase"/>
</dbReference>
<dbReference type="GO" id="GO:0036503">
    <property type="term" value="P:ERAD pathway"/>
    <property type="evidence" value="ECO:0000318"/>
    <property type="project" value="GO_Central"/>
</dbReference>
<dbReference type="GO" id="GO:1900039">
    <property type="term" value="P:positive regulation of cellular response to hypoxia"/>
    <property type="evidence" value="ECO:0000315"/>
    <property type="project" value="PomBase"/>
</dbReference>
<dbReference type="GO" id="GO:0043161">
    <property type="term" value="P:proteasome-mediated ubiquitin-dependent protein catabolic process"/>
    <property type="evidence" value="ECO:0000266"/>
    <property type="project" value="PomBase"/>
</dbReference>
<dbReference type="GO" id="GO:0032933">
    <property type="term" value="P:SREBP signaling pathway"/>
    <property type="evidence" value="ECO:0000315"/>
    <property type="project" value="PomBase"/>
</dbReference>
<dbReference type="CDD" id="cd14279">
    <property type="entry name" value="CUE"/>
    <property type="match status" value="1"/>
</dbReference>
<dbReference type="CDD" id="cd01767">
    <property type="entry name" value="UBX"/>
    <property type="match status" value="1"/>
</dbReference>
<dbReference type="Gene3D" id="3.40.30.10">
    <property type="entry name" value="Glutaredoxin"/>
    <property type="match status" value="1"/>
</dbReference>
<dbReference type="Gene3D" id="3.10.20.90">
    <property type="entry name" value="Phosphatidylinositol 3-kinase Catalytic Subunit, Chain A, domain 1"/>
    <property type="match status" value="1"/>
</dbReference>
<dbReference type="InterPro" id="IPR036249">
    <property type="entry name" value="Thioredoxin-like_sf"/>
</dbReference>
<dbReference type="InterPro" id="IPR006577">
    <property type="entry name" value="UAS"/>
</dbReference>
<dbReference type="InterPro" id="IPR029071">
    <property type="entry name" value="Ubiquitin-like_domsf"/>
</dbReference>
<dbReference type="InterPro" id="IPR001012">
    <property type="entry name" value="UBX_dom"/>
</dbReference>
<dbReference type="InterPro" id="IPR050730">
    <property type="entry name" value="UBX_domain-protein"/>
</dbReference>
<dbReference type="PANTHER" id="PTHR23322:SF1">
    <property type="entry name" value="FAS-ASSOCIATED FACTOR 2"/>
    <property type="match status" value="1"/>
</dbReference>
<dbReference type="PANTHER" id="PTHR23322">
    <property type="entry name" value="FAS-ASSOCIATED PROTEIN"/>
    <property type="match status" value="1"/>
</dbReference>
<dbReference type="Pfam" id="PF00789">
    <property type="entry name" value="UBX"/>
    <property type="match status" value="1"/>
</dbReference>
<dbReference type="SMART" id="SM00594">
    <property type="entry name" value="UAS"/>
    <property type="match status" value="1"/>
</dbReference>
<dbReference type="SMART" id="SM00166">
    <property type="entry name" value="UBX"/>
    <property type="match status" value="1"/>
</dbReference>
<dbReference type="SUPFAM" id="SSF52833">
    <property type="entry name" value="Thioredoxin-like"/>
    <property type="match status" value="1"/>
</dbReference>
<dbReference type="SUPFAM" id="SSF54236">
    <property type="entry name" value="Ubiquitin-like"/>
    <property type="match status" value="1"/>
</dbReference>
<dbReference type="PROSITE" id="PS50033">
    <property type="entry name" value="UBX"/>
    <property type="match status" value="1"/>
</dbReference>
<keyword id="KW-0175">Coiled coil</keyword>
<keyword id="KW-0256">Endoplasmic reticulum</keyword>
<keyword id="KW-1185">Reference proteome</keyword>
<keyword id="KW-0833">Ubl conjugation pathway</keyword>
<comment type="function">
    <text evidence="1">Involved in protein degradation through the ubiquitin/proteasome pathway.</text>
</comment>
<comment type="subcellular location">
    <subcellularLocation>
        <location evidence="4">Endoplasmic reticulum</location>
    </subcellularLocation>
</comment>
<reference key="1">
    <citation type="journal article" date="2002" name="Nature">
        <title>The genome sequence of Schizosaccharomyces pombe.</title>
        <authorList>
            <person name="Wood V."/>
            <person name="Gwilliam R."/>
            <person name="Rajandream M.A."/>
            <person name="Lyne M.H."/>
            <person name="Lyne R."/>
            <person name="Stewart A."/>
            <person name="Sgouros J.G."/>
            <person name="Peat N."/>
            <person name="Hayles J."/>
            <person name="Baker S.G."/>
            <person name="Basham D."/>
            <person name="Bowman S."/>
            <person name="Brooks K."/>
            <person name="Brown D."/>
            <person name="Brown S."/>
            <person name="Chillingworth T."/>
            <person name="Churcher C.M."/>
            <person name="Collins M."/>
            <person name="Connor R."/>
            <person name="Cronin A."/>
            <person name="Davis P."/>
            <person name="Feltwell T."/>
            <person name="Fraser A."/>
            <person name="Gentles S."/>
            <person name="Goble A."/>
            <person name="Hamlin N."/>
            <person name="Harris D.E."/>
            <person name="Hidalgo J."/>
            <person name="Hodgson G."/>
            <person name="Holroyd S."/>
            <person name="Hornsby T."/>
            <person name="Howarth S."/>
            <person name="Huckle E.J."/>
            <person name="Hunt S."/>
            <person name="Jagels K."/>
            <person name="James K.D."/>
            <person name="Jones L."/>
            <person name="Jones M."/>
            <person name="Leather S."/>
            <person name="McDonald S."/>
            <person name="McLean J."/>
            <person name="Mooney P."/>
            <person name="Moule S."/>
            <person name="Mungall K.L."/>
            <person name="Murphy L.D."/>
            <person name="Niblett D."/>
            <person name="Odell C."/>
            <person name="Oliver K."/>
            <person name="O'Neil S."/>
            <person name="Pearson D."/>
            <person name="Quail M.A."/>
            <person name="Rabbinowitsch E."/>
            <person name="Rutherford K.M."/>
            <person name="Rutter S."/>
            <person name="Saunders D."/>
            <person name="Seeger K."/>
            <person name="Sharp S."/>
            <person name="Skelton J."/>
            <person name="Simmonds M.N."/>
            <person name="Squares R."/>
            <person name="Squares S."/>
            <person name="Stevens K."/>
            <person name="Taylor K."/>
            <person name="Taylor R.G."/>
            <person name="Tivey A."/>
            <person name="Walsh S.V."/>
            <person name="Warren T."/>
            <person name="Whitehead S."/>
            <person name="Woodward J.R."/>
            <person name="Volckaert G."/>
            <person name="Aert R."/>
            <person name="Robben J."/>
            <person name="Grymonprez B."/>
            <person name="Weltjens I."/>
            <person name="Vanstreels E."/>
            <person name="Rieger M."/>
            <person name="Schaefer M."/>
            <person name="Mueller-Auer S."/>
            <person name="Gabel C."/>
            <person name="Fuchs M."/>
            <person name="Duesterhoeft A."/>
            <person name="Fritzc C."/>
            <person name="Holzer E."/>
            <person name="Moestl D."/>
            <person name="Hilbert H."/>
            <person name="Borzym K."/>
            <person name="Langer I."/>
            <person name="Beck A."/>
            <person name="Lehrach H."/>
            <person name="Reinhardt R."/>
            <person name="Pohl T.M."/>
            <person name="Eger P."/>
            <person name="Zimmermann W."/>
            <person name="Wedler H."/>
            <person name="Wambutt R."/>
            <person name="Purnelle B."/>
            <person name="Goffeau A."/>
            <person name="Cadieu E."/>
            <person name="Dreano S."/>
            <person name="Gloux S."/>
            <person name="Lelaure V."/>
            <person name="Mottier S."/>
            <person name="Galibert F."/>
            <person name="Aves S.J."/>
            <person name="Xiang Z."/>
            <person name="Hunt C."/>
            <person name="Moore K."/>
            <person name="Hurst S.M."/>
            <person name="Lucas M."/>
            <person name="Rochet M."/>
            <person name="Gaillardin C."/>
            <person name="Tallada V.A."/>
            <person name="Garzon A."/>
            <person name="Thode G."/>
            <person name="Daga R.R."/>
            <person name="Cruzado L."/>
            <person name="Jimenez J."/>
            <person name="Sanchez M."/>
            <person name="del Rey F."/>
            <person name="Benito J."/>
            <person name="Dominguez A."/>
            <person name="Revuelta J.L."/>
            <person name="Moreno S."/>
            <person name="Armstrong J."/>
            <person name="Forsburg S.L."/>
            <person name="Cerutti L."/>
            <person name="Lowe T."/>
            <person name="McCombie W.R."/>
            <person name="Paulsen I."/>
            <person name="Potashkin J."/>
            <person name="Shpakovski G.V."/>
            <person name="Ussery D."/>
            <person name="Barrell B.G."/>
            <person name="Nurse P."/>
        </authorList>
    </citation>
    <scope>NUCLEOTIDE SEQUENCE [LARGE SCALE GENOMIC DNA]</scope>
    <source>
        <strain>972 / ATCC 24843</strain>
    </source>
</reference>
<reference key="2">
    <citation type="journal article" date="2006" name="Nat. Biotechnol.">
        <title>ORFeome cloning and global analysis of protein localization in the fission yeast Schizosaccharomyces pombe.</title>
        <authorList>
            <person name="Matsuyama A."/>
            <person name="Arai R."/>
            <person name="Yashiroda Y."/>
            <person name="Shirai A."/>
            <person name="Kamata A."/>
            <person name="Sekido S."/>
            <person name="Kobayashi Y."/>
            <person name="Hashimoto A."/>
            <person name="Hamamoto M."/>
            <person name="Hiraoka Y."/>
            <person name="Horinouchi S."/>
            <person name="Yoshida M."/>
        </authorList>
    </citation>
    <scope>SUBCELLULAR LOCATION [LARGE SCALE ANALYSIS]</scope>
</reference>
<protein>
    <recommendedName>
        <fullName>UBX domain-containing protein 10</fullName>
    </recommendedName>
</protein>
<gene>
    <name type="primary">ucp10</name>
    <name type="ORF">SPCC285.11</name>
</gene>
<name>UCP10_SCHPO</name>
<accession>O74498</accession>
<evidence type="ECO:0000250" key="1"/>
<evidence type="ECO:0000255" key="2"/>
<evidence type="ECO:0000255" key="3">
    <source>
        <dbReference type="PROSITE-ProRule" id="PRU00215"/>
    </source>
</evidence>
<evidence type="ECO:0000269" key="4">
    <source>
    </source>
</evidence>
<organism>
    <name type="scientific">Schizosaccharomyces pombe (strain 972 / ATCC 24843)</name>
    <name type="common">Fission yeast</name>
    <dbReference type="NCBI Taxonomy" id="284812"/>
    <lineage>
        <taxon>Eukaryota</taxon>
        <taxon>Fungi</taxon>
        <taxon>Dikarya</taxon>
        <taxon>Ascomycota</taxon>
        <taxon>Taphrinomycotina</taxon>
        <taxon>Schizosaccharomycetes</taxon>
        <taxon>Schizosaccharomycetales</taxon>
        <taxon>Schizosaccharomycetaceae</taxon>
        <taxon>Schizosaccharomyces</taxon>
    </lineage>
</organism>
<proteinExistence type="inferred from homology"/>
<sequence length="427" mass="48671">MSGSRKQEAIDELRNSLDVPADTAQSVLESFNWDVQEAIESLTGESSRVDRNSKLGLSFGVFQSVFSLLFSGLHKLWMILSRVPLISTFIPIFGTTKRVLSPADTANKLVQNLEEQYGTEHIDFFTDGGYMEALTRIKRNYGVALLFFTSSKNDDSETFSRSVLMNQELKEFLNRRNILCWTGDVCEDEAFRGSRQFHCTKFPSAVLVMYSPQLSELVVAAQLHGCLDSSSIITNLTNALAKHLPSLERFRSEREAREAARELRRQQDNAYQASLARDRERQAFARAEEERLAKEKEEREIVQKKKKQYRAWLASNLPPEPSSEDEPARLSIRFPDGSRAVRRFKKDDTVESVYNYVDYMLFEKEEPEEFGRATSSSNPVTPPSDYKHDFHFQLYSSLPRALLKPSVAISTNKAIFPNGTVVVELDD</sequence>